<accession>P67342</accession>
<accession>Q8Z7M1</accession>
<accession>Q8ZQ29</accession>
<evidence type="ECO:0000255" key="1">
    <source>
        <dbReference type="HAMAP-Rule" id="MF_01205"/>
    </source>
</evidence>
<evidence type="ECO:0000305" key="2"/>
<dbReference type="EC" id="3.1.1.106" evidence="1"/>
<dbReference type="EMBL" id="AL513382">
    <property type="protein sequence ID" value="CAD08271.1"/>
    <property type="status" value="ALT_INIT"/>
    <property type="molecule type" value="Genomic_DNA"/>
</dbReference>
<dbReference type="EMBL" id="AE014613">
    <property type="protein sequence ID" value="AAO69396.1"/>
    <property type="status" value="ALT_INIT"/>
    <property type="molecule type" value="Genomic_DNA"/>
</dbReference>
<dbReference type="PIR" id="AD0636">
    <property type="entry name" value="AD0636"/>
</dbReference>
<dbReference type="RefSeq" id="NP_455641.1">
    <property type="nucleotide sequence ID" value="NC_003198.1"/>
</dbReference>
<dbReference type="RefSeq" id="WP_000203944.1">
    <property type="nucleotide sequence ID" value="NZ_WSUR01000018.1"/>
</dbReference>
<dbReference type="SMR" id="P67342"/>
<dbReference type="STRING" id="220341.gene:17585151"/>
<dbReference type="KEGG" id="stt:t1773"/>
<dbReference type="KEGG" id="sty:STY1184"/>
<dbReference type="PATRIC" id="fig|220341.7.peg.1185"/>
<dbReference type="eggNOG" id="COG2110">
    <property type="taxonomic scope" value="Bacteria"/>
</dbReference>
<dbReference type="HOGENOM" id="CLU_046550_5_1_6"/>
<dbReference type="OMA" id="AKWVIHT"/>
<dbReference type="OrthoDB" id="6194521at2"/>
<dbReference type="Proteomes" id="UP000000541">
    <property type="component" value="Chromosome"/>
</dbReference>
<dbReference type="Proteomes" id="UP000002670">
    <property type="component" value="Chromosome"/>
</dbReference>
<dbReference type="GO" id="GO:0061463">
    <property type="term" value="F:O-acetyl-ADP-ribose deacetylase activity"/>
    <property type="evidence" value="ECO:0007669"/>
    <property type="project" value="UniProtKB-EC"/>
</dbReference>
<dbReference type="GO" id="GO:0001883">
    <property type="term" value="F:purine nucleoside binding"/>
    <property type="evidence" value="ECO:0007669"/>
    <property type="project" value="UniProtKB-UniRule"/>
</dbReference>
<dbReference type="GO" id="GO:0008428">
    <property type="term" value="F:ribonuclease inhibitor activity"/>
    <property type="evidence" value="ECO:0007669"/>
    <property type="project" value="UniProtKB-UniRule"/>
</dbReference>
<dbReference type="GO" id="GO:0042278">
    <property type="term" value="P:purine nucleoside metabolic process"/>
    <property type="evidence" value="ECO:0007669"/>
    <property type="project" value="UniProtKB-UniRule"/>
</dbReference>
<dbReference type="CDD" id="cd02908">
    <property type="entry name" value="Macro_OAADPr_deacetylase"/>
    <property type="match status" value="1"/>
</dbReference>
<dbReference type="Gene3D" id="3.40.220.10">
    <property type="entry name" value="Leucine Aminopeptidase, subunit E, domain 1"/>
    <property type="match status" value="1"/>
</dbReference>
<dbReference type="HAMAP" id="MF_01205">
    <property type="entry name" value="YmdB"/>
    <property type="match status" value="1"/>
</dbReference>
<dbReference type="InterPro" id="IPR002589">
    <property type="entry name" value="Macro_dom"/>
</dbReference>
<dbReference type="InterPro" id="IPR043472">
    <property type="entry name" value="Macro_dom-like"/>
</dbReference>
<dbReference type="InterPro" id="IPR024900">
    <property type="entry name" value="O-Ac-ADP-ribose_deAcase"/>
</dbReference>
<dbReference type="NCBIfam" id="NF001660">
    <property type="entry name" value="PRK00431.1-1"/>
    <property type="match status" value="1"/>
</dbReference>
<dbReference type="NCBIfam" id="NF001664">
    <property type="entry name" value="PRK00431.1-6"/>
    <property type="match status" value="1"/>
</dbReference>
<dbReference type="PANTHER" id="PTHR11106">
    <property type="entry name" value="GANGLIOSIDE INDUCED DIFFERENTIATION ASSOCIATED PROTEIN 2-RELATED"/>
    <property type="match status" value="1"/>
</dbReference>
<dbReference type="PANTHER" id="PTHR11106:SF27">
    <property type="entry name" value="MACRO DOMAIN-CONTAINING PROTEIN"/>
    <property type="match status" value="1"/>
</dbReference>
<dbReference type="Pfam" id="PF01661">
    <property type="entry name" value="Macro"/>
    <property type="match status" value="1"/>
</dbReference>
<dbReference type="SMART" id="SM00506">
    <property type="entry name" value="A1pp"/>
    <property type="match status" value="1"/>
</dbReference>
<dbReference type="SUPFAM" id="SSF52949">
    <property type="entry name" value="Macro domain-like"/>
    <property type="match status" value="1"/>
</dbReference>
<dbReference type="PROSITE" id="PS51154">
    <property type="entry name" value="MACRO"/>
    <property type="match status" value="1"/>
</dbReference>
<feature type="chain" id="PRO_0000089207" description="O-acetyl-ADP-ribose deacetylase">
    <location>
        <begin position="1"/>
        <end position="179"/>
    </location>
</feature>
<feature type="domain" description="Macro" evidence="1">
    <location>
        <begin position="1"/>
        <end position="175"/>
    </location>
</feature>
<feature type="active site" description="Proton acceptor" evidence="1">
    <location>
        <position position="35"/>
    </location>
</feature>
<feature type="binding site" evidence="1">
    <location>
        <begin position="11"/>
        <end position="12"/>
    </location>
    <ligand>
        <name>substrate</name>
    </ligand>
</feature>
<feature type="binding site" evidence="1">
    <location>
        <position position="25"/>
    </location>
    <ligand>
        <name>substrate</name>
    </ligand>
</feature>
<feature type="binding site" evidence="1">
    <location>
        <begin position="33"/>
        <end position="35"/>
    </location>
    <ligand>
        <name>substrate</name>
    </ligand>
</feature>
<feature type="binding site" evidence="1">
    <location>
        <begin position="122"/>
        <end position="126"/>
    </location>
    <ligand>
        <name>substrate</name>
    </ligand>
</feature>
<gene>
    <name evidence="1" type="primary">ymdB</name>
    <name type="ordered locus">STY1184</name>
    <name type="ordered locus">t1773</name>
</gene>
<proteinExistence type="inferred from homology"/>
<keyword id="KW-0378">Hydrolase</keyword>
<sequence>MTSRLQVIQGDITQLSVDAIVNAANASLMGGGGVDGAIHRAAGPALLDACKLIRQQQGECQTGHAVITPAGKLSAKAVIHTVGPVWRGGEHQEAELLEEAYRNCLLLAEANHFRSIAFPAISTGVYGYPRAQAAEVAVRTVSDFITRYALPEQVYFVCYDEETARLYARLLTQQGDDPA</sequence>
<protein>
    <recommendedName>
        <fullName evidence="1">O-acetyl-ADP-ribose deacetylase</fullName>
        <ecNumber evidence="1">3.1.1.106</ecNumber>
    </recommendedName>
    <alternativeName>
        <fullName evidence="1">Regulator of RNase III activity</fullName>
    </alternativeName>
</protein>
<comment type="function">
    <text evidence="1">Deacetylates O-acetyl-ADP ribose to yield ADP-ribose and free acetate. Down-regulates ribonuclease 3 (RNase III) activity. Acts by interacting directly with the region of the ribonuclease that is required for dimerization/activation.</text>
</comment>
<comment type="catalytic activity">
    <reaction evidence="1">
        <text>3''-O-acetyl-ADP-D-ribose + H2O = ADP-D-ribose + acetate + H(+)</text>
        <dbReference type="Rhea" id="RHEA:59244"/>
        <dbReference type="ChEBI" id="CHEBI:15377"/>
        <dbReference type="ChEBI" id="CHEBI:15378"/>
        <dbReference type="ChEBI" id="CHEBI:30089"/>
        <dbReference type="ChEBI" id="CHEBI:57967"/>
        <dbReference type="ChEBI" id="CHEBI:142723"/>
        <dbReference type="EC" id="3.1.1.106"/>
    </reaction>
</comment>
<comment type="catalytic activity">
    <reaction evidence="1">
        <text>2''-O-acetyl-ADP-D-ribose + H2O = ADP-D-ribose + acetate + H(+)</text>
        <dbReference type="Rhea" id="RHEA:57060"/>
        <dbReference type="ChEBI" id="CHEBI:15377"/>
        <dbReference type="ChEBI" id="CHEBI:15378"/>
        <dbReference type="ChEBI" id="CHEBI:30089"/>
        <dbReference type="ChEBI" id="CHEBI:57967"/>
        <dbReference type="ChEBI" id="CHEBI:83767"/>
        <dbReference type="EC" id="3.1.1.106"/>
    </reaction>
</comment>
<comment type="subunit">
    <text evidence="1">Homodimer. Interacts with RNase III.</text>
</comment>
<comment type="similarity">
    <text evidence="1">Belongs to the MacroD-type family. YmdB subfamily.</text>
</comment>
<comment type="sequence caution" evidence="2">
    <conflict type="erroneous initiation">
        <sequence resource="EMBL-CDS" id="AAO69396"/>
    </conflict>
</comment>
<comment type="sequence caution" evidence="2">
    <conflict type="erroneous initiation">
        <sequence resource="EMBL-CDS" id="CAD08271"/>
    </conflict>
</comment>
<reference key="1">
    <citation type="journal article" date="2001" name="Nature">
        <title>Complete genome sequence of a multiple drug resistant Salmonella enterica serovar Typhi CT18.</title>
        <authorList>
            <person name="Parkhill J."/>
            <person name="Dougan G."/>
            <person name="James K.D."/>
            <person name="Thomson N.R."/>
            <person name="Pickard D."/>
            <person name="Wain J."/>
            <person name="Churcher C.M."/>
            <person name="Mungall K.L."/>
            <person name="Bentley S.D."/>
            <person name="Holden M.T.G."/>
            <person name="Sebaihia M."/>
            <person name="Baker S."/>
            <person name="Basham D."/>
            <person name="Brooks K."/>
            <person name="Chillingworth T."/>
            <person name="Connerton P."/>
            <person name="Cronin A."/>
            <person name="Davis P."/>
            <person name="Davies R.M."/>
            <person name="Dowd L."/>
            <person name="White N."/>
            <person name="Farrar J."/>
            <person name="Feltwell T."/>
            <person name="Hamlin N."/>
            <person name="Haque A."/>
            <person name="Hien T.T."/>
            <person name="Holroyd S."/>
            <person name="Jagels K."/>
            <person name="Krogh A."/>
            <person name="Larsen T.S."/>
            <person name="Leather S."/>
            <person name="Moule S."/>
            <person name="O'Gaora P."/>
            <person name="Parry C."/>
            <person name="Quail M.A."/>
            <person name="Rutherford K.M."/>
            <person name="Simmonds M."/>
            <person name="Skelton J."/>
            <person name="Stevens K."/>
            <person name="Whitehead S."/>
            <person name="Barrell B.G."/>
        </authorList>
    </citation>
    <scope>NUCLEOTIDE SEQUENCE [LARGE SCALE GENOMIC DNA]</scope>
    <source>
        <strain>CT18</strain>
    </source>
</reference>
<reference key="2">
    <citation type="journal article" date="2003" name="J. Bacteriol.">
        <title>Comparative genomics of Salmonella enterica serovar Typhi strains Ty2 and CT18.</title>
        <authorList>
            <person name="Deng W."/>
            <person name="Liou S.-R."/>
            <person name="Plunkett G. III"/>
            <person name="Mayhew G.F."/>
            <person name="Rose D.J."/>
            <person name="Burland V."/>
            <person name="Kodoyianni V."/>
            <person name="Schwartz D.C."/>
            <person name="Blattner F.R."/>
        </authorList>
    </citation>
    <scope>NUCLEOTIDE SEQUENCE [LARGE SCALE GENOMIC DNA]</scope>
    <source>
        <strain>ATCC 700931 / Ty2</strain>
    </source>
</reference>
<organism>
    <name type="scientific">Salmonella typhi</name>
    <dbReference type="NCBI Taxonomy" id="90370"/>
    <lineage>
        <taxon>Bacteria</taxon>
        <taxon>Pseudomonadati</taxon>
        <taxon>Pseudomonadota</taxon>
        <taxon>Gammaproteobacteria</taxon>
        <taxon>Enterobacterales</taxon>
        <taxon>Enterobacteriaceae</taxon>
        <taxon>Salmonella</taxon>
    </lineage>
</organism>
<name>YMDB_SALTI</name>